<comment type="function">
    <text evidence="2">Transcriptional regulator which can act as an activator or a repressor.</text>
</comment>
<comment type="subcellular location">
    <subcellularLocation>
        <location evidence="2">Nucleus</location>
    </subcellularLocation>
</comment>
<comment type="similarity">
    <text evidence="5">Belongs to the PUR DNA-binding protein family.</text>
</comment>
<keyword id="KW-0007">Acetylation</keyword>
<keyword id="KW-0010">Activator</keyword>
<keyword id="KW-0238">DNA-binding</keyword>
<keyword id="KW-0539">Nucleus</keyword>
<keyword id="KW-1185">Reference proteome</keyword>
<keyword id="KW-0678">Repressor</keyword>
<keyword id="KW-0804">Transcription</keyword>
<keyword id="KW-0805">Transcription regulation</keyword>
<gene>
    <name type="primary">purb-a</name>
</gene>
<accession>Q6PAC9</accession>
<protein>
    <recommendedName>
        <fullName>Transcriptional regulator protein Pur-beta-A</fullName>
    </recommendedName>
    <alternativeName>
        <fullName>Purine-rich element-binding protein B-A</fullName>
    </alternativeName>
</protein>
<sequence length="323" mass="34666">MADGDSGSERGGSSGGPGGFSQHMSREQETQELATKRLDIQNKRFYLDVKQNAKGRFIKIAEVGAGGSKSRLTLSMGVAAEFRDYLGDFIEHYAQLGPSSPEQIAQASGEDGAGGPGGPRRALKSEFLVRENRKYYLDLKENQRGRFLRIRQTINRGPGFSGGAGGGAGLQSGQTIALPAQGLIEFRDALAKLIDDYGGEDDEGVGLGGAGGGGGGGMYGELPEGTSITVDSKRFFFDVGSNKYGVFLRVSEVKPSYRNSITVPLKAWGKFGGAFCRYSEEMKEIQERQRDKMYERRGPGDRERSLGPGGGGDDSETEDVDDD</sequence>
<feature type="initiator methionine" description="Removed" evidence="1">
    <location>
        <position position="1"/>
    </location>
</feature>
<feature type="chain" id="PRO_0000225619" description="Transcriptional regulator protein Pur-beta-A">
    <location>
        <begin position="2"/>
        <end position="323"/>
    </location>
</feature>
<feature type="region of interest" description="Disordered" evidence="4">
    <location>
        <begin position="1"/>
        <end position="34"/>
    </location>
</feature>
<feature type="region of interest" description="DNA-binding" evidence="2">
    <location>
        <begin position="27"/>
        <end position="257"/>
    </location>
</feature>
<feature type="region of interest" description="Disordered" evidence="4">
    <location>
        <begin position="100"/>
        <end position="122"/>
    </location>
</feature>
<feature type="region of interest" description="Disordered" evidence="4">
    <location>
        <begin position="286"/>
        <end position="323"/>
    </location>
</feature>
<feature type="compositionally biased region" description="Gly residues" evidence="4">
    <location>
        <begin position="9"/>
        <end position="19"/>
    </location>
</feature>
<feature type="compositionally biased region" description="Basic and acidic residues" evidence="4">
    <location>
        <begin position="24"/>
        <end position="34"/>
    </location>
</feature>
<feature type="compositionally biased region" description="Basic and acidic residues" evidence="4">
    <location>
        <begin position="286"/>
        <end position="305"/>
    </location>
</feature>
<feature type="compositionally biased region" description="Acidic residues" evidence="4">
    <location>
        <begin position="313"/>
        <end position="323"/>
    </location>
</feature>
<feature type="modified residue" description="N-acetylalanine" evidence="3">
    <location>
        <position position="2"/>
    </location>
</feature>
<dbReference type="EMBL" id="BC060366">
    <property type="status" value="NOT_ANNOTATED_CDS"/>
    <property type="molecule type" value="mRNA"/>
</dbReference>
<dbReference type="SMR" id="Q6PAC9"/>
<dbReference type="GeneID" id="108711569"/>
<dbReference type="KEGG" id="xla:108711569"/>
<dbReference type="AGR" id="Xenbase:XB-GENE-6255438"/>
<dbReference type="CTD" id="108711569"/>
<dbReference type="Xenbase" id="XB-GENE-6255438">
    <property type="gene designation" value="purb.L"/>
</dbReference>
<dbReference type="OMA" id="AKEDGWS"/>
<dbReference type="OrthoDB" id="523901at2759"/>
<dbReference type="Proteomes" id="UP000186698">
    <property type="component" value="Chromosome 3L"/>
</dbReference>
<dbReference type="Bgee" id="108711569">
    <property type="expression patterns" value="Expressed in brain and 19 other cell types or tissues"/>
</dbReference>
<dbReference type="GO" id="GO:0005634">
    <property type="term" value="C:nucleus"/>
    <property type="evidence" value="ECO:0000250"/>
    <property type="project" value="UniProtKB"/>
</dbReference>
<dbReference type="GO" id="GO:0000981">
    <property type="term" value="F:DNA-binding transcription factor activity, RNA polymerase II-specific"/>
    <property type="evidence" value="ECO:0000318"/>
    <property type="project" value="GO_Central"/>
</dbReference>
<dbReference type="GO" id="GO:0001227">
    <property type="term" value="F:DNA-binding transcription repressor activity, RNA polymerase II-specific"/>
    <property type="evidence" value="ECO:0000250"/>
    <property type="project" value="UniProtKB"/>
</dbReference>
<dbReference type="GO" id="GO:0032422">
    <property type="term" value="F:purine-rich negative regulatory element binding"/>
    <property type="evidence" value="ECO:0000318"/>
    <property type="project" value="GO_Central"/>
</dbReference>
<dbReference type="GO" id="GO:0000977">
    <property type="term" value="F:RNA polymerase II transcription regulatory region sequence-specific DNA binding"/>
    <property type="evidence" value="ECO:0000318"/>
    <property type="project" value="GO_Central"/>
</dbReference>
<dbReference type="GO" id="GO:0045944">
    <property type="term" value="P:positive regulation of transcription by RNA polymerase II"/>
    <property type="evidence" value="ECO:0000250"/>
    <property type="project" value="UniProtKB"/>
</dbReference>
<dbReference type="GO" id="GO:0006357">
    <property type="term" value="P:regulation of transcription by RNA polymerase II"/>
    <property type="evidence" value="ECO:0000318"/>
    <property type="project" value="GO_Central"/>
</dbReference>
<dbReference type="FunFam" id="3.10.450.700:FF:000001">
    <property type="entry name" value="Purine-rich element binding protein A"/>
    <property type="match status" value="1"/>
</dbReference>
<dbReference type="FunFam" id="3.30.2450.30:FF:000001">
    <property type="entry name" value="Purine-rich element binding protein A"/>
    <property type="match status" value="1"/>
</dbReference>
<dbReference type="Gene3D" id="3.10.450.700">
    <property type="match status" value="1"/>
</dbReference>
<dbReference type="Gene3D" id="3.30.2450.30">
    <property type="match status" value="1"/>
</dbReference>
<dbReference type="InterPro" id="IPR006628">
    <property type="entry name" value="PUR-bd_fam"/>
</dbReference>
<dbReference type="PANTHER" id="PTHR12611">
    <property type="entry name" value="PUR-TRANSCRIPTIONAL ACTIVATOR"/>
    <property type="match status" value="1"/>
</dbReference>
<dbReference type="PANTHER" id="PTHR12611:SF4">
    <property type="entry name" value="TRANSCRIPTIONAL ACTIVATOR PROTEIN PUR-BETA"/>
    <property type="match status" value="1"/>
</dbReference>
<dbReference type="Pfam" id="PF04845">
    <property type="entry name" value="PurA"/>
    <property type="match status" value="1"/>
</dbReference>
<dbReference type="SMART" id="SM00712">
    <property type="entry name" value="PUR"/>
    <property type="match status" value="3"/>
</dbReference>
<evidence type="ECO:0000250" key="1"/>
<evidence type="ECO:0000250" key="2">
    <source>
        <dbReference type="UniProtKB" id="O35295"/>
    </source>
</evidence>
<evidence type="ECO:0000250" key="3">
    <source>
        <dbReference type="UniProtKB" id="Q96QR8"/>
    </source>
</evidence>
<evidence type="ECO:0000256" key="4">
    <source>
        <dbReference type="SAM" id="MobiDB-lite"/>
    </source>
</evidence>
<evidence type="ECO:0000305" key="5"/>
<proteinExistence type="evidence at transcript level"/>
<organism>
    <name type="scientific">Xenopus laevis</name>
    <name type="common">African clawed frog</name>
    <dbReference type="NCBI Taxonomy" id="8355"/>
    <lineage>
        <taxon>Eukaryota</taxon>
        <taxon>Metazoa</taxon>
        <taxon>Chordata</taxon>
        <taxon>Craniata</taxon>
        <taxon>Vertebrata</taxon>
        <taxon>Euteleostomi</taxon>
        <taxon>Amphibia</taxon>
        <taxon>Batrachia</taxon>
        <taxon>Anura</taxon>
        <taxon>Pipoidea</taxon>
        <taxon>Pipidae</taxon>
        <taxon>Xenopodinae</taxon>
        <taxon>Xenopus</taxon>
        <taxon>Xenopus</taxon>
    </lineage>
</organism>
<reference key="1">
    <citation type="submission" date="2006-04" db="EMBL/GenBank/DDBJ databases">
        <authorList>
            <consortium name="NIH - Xenopus Gene Collection (XGC) project"/>
        </authorList>
    </citation>
    <scope>NUCLEOTIDE SEQUENCE [LARGE SCALE MRNA]</scope>
    <source>
        <tissue>Embryo</tissue>
    </source>
</reference>
<name>PURBA_XENLA</name>